<accession>Q02IC8</accession>
<gene>
    <name evidence="1" type="primary">ruvA</name>
    <name type="ordered locus">PA14_51790</name>
</gene>
<keyword id="KW-0963">Cytoplasm</keyword>
<keyword id="KW-0227">DNA damage</keyword>
<keyword id="KW-0233">DNA recombination</keyword>
<keyword id="KW-0234">DNA repair</keyword>
<keyword id="KW-0238">DNA-binding</keyword>
<organism>
    <name type="scientific">Pseudomonas aeruginosa (strain UCBPP-PA14)</name>
    <dbReference type="NCBI Taxonomy" id="208963"/>
    <lineage>
        <taxon>Bacteria</taxon>
        <taxon>Pseudomonadati</taxon>
        <taxon>Pseudomonadota</taxon>
        <taxon>Gammaproteobacteria</taxon>
        <taxon>Pseudomonadales</taxon>
        <taxon>Pseudomonadaceae</taxon>
        <taxon>Pseudomonas</taxon>
    </lineage>
</organism>
<evidence type="ECO:0000255" key="1">
    <source>
        <dbReference type="HAMAP-Rule" id="MF_00031"/>
    </source>
</evidence>
<feature type="chain" id="PRO_1000002517" description="Holliday junction branch migration complex subunit RuvA">
    <location>
        <begin position="1"/>
        <end position="201"/>
    </location>
</feature>
<feature type="region of interest" description="Domain I" evidence="1">
    <location>
        <begin position="1"/>
        <end position="64"/>
    </location>
</feature>
<feature type="region of interest" description="Domain II" evidence="1">
    <location>
        <begin position="65"/>
        <end position="143"/>
    </location>
</feature>
<feature type="region of interest" description="Flexible linker" evidence="1">
    <location>
        <begin position="144"/>
        <end position="152"/>
    </location>
</feature>
<feature type="region of interest" description="Domain III" evidence="1">
    <location>
        <begin position="153"/>
        <end position="201"/>
    </location>
</feature>
<protein>
    <recommendedName>
        <fullName evidence="1">Holliday junction branch migration complex subunit RuvA</fullName>
    </recommendedName>
</protein>
<comment type="function">
    <text evidence="1">The RuvA-RuvB-RuvC complex processes Holliday junction (HJ) DNA during genetic recombination and DNA repair, while the RuvA-RuvB complex plays an important role in the rescue of blocked DNA replication forks via replication fork reversal (RFR). RuvA specifically binds to HJ cruciform DNA, conferring on it an open structure. The RuvB hexamer acts as an ATP-dependent pump, pulling dsDNA into and through the RuvAB complex. HJ branch migration allows RuvC to scan DNA until it finds its consensus sequence, where it cleaves and resolves the cruciform DNA.</text>
</comment>
<comment type="subunit">
    <text evidence="1">Homotetramer. Forms an RuvA(8)-RuvB(12)-Holliday junction (HJ) complex. HJ DNA is sandwiched between 2 RuvA tetramers; dsDNA enters through RuvA and exits via RuvB. An RuvB hexamer assembles on each DNA strand where it exits the tetramer. Each RuvB hexamer is contacted by two RuvA subunits (via domain III) on 2 adjacent RuvB subunits; this complex drives branch migration. In the full resolvosome a probable DNA-RuvA(4)-RuvB(12)-RuvC(2) complex forms which resolves the HJ.</text>
</comment>
<comment type="subcellular location">
    <subcellularLocation>
        <location evidence="1">Cytoplasm</location>
    </subcellularLocation>
</comment>
<comment type="domain">
    <text evidence="1">Has three domains with a flexible linker between the domains II and III and assumes an 'L' shape. Domain III is highly mobile and contacts RuvB.</text>
</comment>
<comment type="similarity">
    <text evidence="1">Belongs to the RuvA family.</text>
</comment>
<proteinExistence type="inferred from homology"/>
<name>RUVA_PSEAB</name>
<sequence>MIGRLRGTLAEKQPPHLILDVNGVGYEVEVPMTTLYRLPSVGEPVTLHTHLVVREDAHLLYGFAEKRERELFRELIRLNGVGPKLALALMSGLEVDELVRCVQAQDTSTLVKIPGVGKKTAERLLVELKDRFKAWENMPTIAPLVMEPRASATVSSAEADAVSALIALGFKPQEASRAVAAVPGEDLSSEEMIRQALKGMV</sequence>
<dbReference type="EMBL" id="CP000438">
    <property type="protein sequence ID" value="ABJ10127.1"/>
    <property type="molecule type" value="Genomic_DNA"/>
</dbReference>
<dbReference type="RefSeq" id="WP_003086122.1">
    <property type="nucleotide sequence ID" value="NZ_CP034244.1"/>
</dbReference>
<dbReference type="SMR" id="Q02IC8"/>
<dbReference type="GeneID" id="77222451"/>
<dbReference type="KEGG" id="pau:PA14_51790"/>
<dbReference type="PseudoCAP" id="PA14_51790"/>
<dbReference type="HOGENOM" id="CLU_087936_0_0_6"/>
<dbReference type="BioCyc" id="PAER208963:G1G74-4356-MONOMER"/>
<dbReference type="Proteomes" id="UP000000653">
    <property type="component" value="Chromosome"/>
</dbReference>
<dbReference type="GO" id="GO:0005737">
    <property type="term" value="C:cytoplasm"/>
    <property type="evidence" value="ECO:0007669"/>
    <property type="project" value="UniProtKB-SubCell"/>
</dbReference>
<dbReference type="GO" id="GO:0009379">
    <property type="term" value="C:Holliday junction helicase complex"/>
    <property type="evidence" value="ECO:0007669"/>
    <property type="project" value="InterPro"/>
</dbReference>
<dbReference type="GO" id="GO:0048476">
    <property type="term" value="C:Holliday junction resolvase complex"/>
    <property type="evidence" value="ECO:0007669"/>
    <property type="project" value="UniProtKB-UniRule"/>
</dbReference>
<dbReference type="GO" id="GO:0005524">
    <property type="term" value="F:ATP binding"/>
    <property type="evidence" value="ECO:0007669"/>
    <property type="project" value="InterPro"/>
</dbReference>
<dbReference type="GO" id="GO:0000400">
    <property type="term" value="F:four-way junction DNA binding"/>
    <property type="evidence" value="ECO:0007669"/>
    <property type="project" value="UniProtKB-UniRule"/>
</dbReference>
<dbReference type="GO" id="GO:0009378">
    <property type="term" value="F:four-way junction helicase activity"/>
    <property type="evidence" value="ECO:0007669"/>
    <property type="project" value="InterPro"/>
</dbReference>
<dbReference type="GO" id="GO:0006310">
    <property type="term" value="P:DNA recombination"/>
    <property type="evidence" value="ECO:0007669"/>
    <property type="project" value="UniProtKB-UniRule"/>
</dbReference>
<dbReference type="GO" id="GO:0006281">
    <property type="term" value="P:DNA repair"/>
    <property type="evidence" value="ECO:0007669"/>
    <property type="project" value="UniProtKB-UniRule"/>
</dbReference>
<dbReference type="CDD" id="cd14332">
    <property type="entry name" value="UBA_RuvA_C"/>
    <property type="match status" value="1"/>
</dbReference>
<dbReference type="Gene3D" id="1.10.150.20">
    <property type="entry name" value="5' to 3' exonuclease, C-terminal subdomain"/>
    <property type="match status" value="1"/>
</dbReference>
<dbReference type="Gene3D" id="1.10.8.10">
    <property type="entry name" value="DNA helicase RuvA subunit, C-terminal domain"/>
    <property type="match status" value="1"/>
</dbReference>
<dbReference type="Gene3D" id="2.40.50.140">
    <property type="entry name" value="Nucleic acid-binding proteins"/>
    <property type="match status" value="1"/>
</dbReference>
<dbReference type="HAMAP" id="MF_00031">
    <property type="entry name" value="DNA_HJ_migration_RuvA"/>
    <property type="match status" value="1"/>
</dbReference>
<dbReference type="InterPro" id="IPR013849">
    <property type="entry name" value="DNA_helicase_Holl-junc_RuvA_I"/>
</dbReference>
<dbReference type="InterPro" id="IPR003583">
    <property type="entry name" value="Hlx-hairpin-Hlx_DNA-bd_motif"/>
</dbReference>
<dbReference type="InterPro" id="IPR012340">
    <property type="entry name" value="NA-bd_OB-fold"/>
</dbReference>
<dbReference type="InterPro" id="IPR000085">
    <property type="entry name" value="RuvA"/>
</dbReference>
<dbReference type="InterPro" id="IPR010994">
    <property type="entry name" value="RuvA_2-like"/>
</dbReference>
<dbReference type="InterPro" id="IPR011114">
    <property type="entry name" value="RuvA_C"/>
</dbReference>
<dbReference type="InterPro" id="IPR036267">
    <property type="entry name" value="RuvA_C_sf"/>
</dbReference>
<dbReference type="NCBIfam" id="TIGR00084">
    <property type="entry name" value="ruvA"/>
    <property type="match status" value="1"/>
</dbReference>
<dbReference type="Pfam" id="PF14520">
    <property type="entry name" value="HHH_5"/>
    <property type="match status" value="1"/>
</dbReference>
<dbReference type="Pfam" id="PF07499">
    <property type="entry name" value="RuvA_C"/>
    <property type="match status" value="1"/>
</dbReference>
<dbReference type="Pfam" id="PF01330">
    <property type="entry name" value="RuvA_N"/>
    <property type="match status" value="1"/>
</dbReference>
<dbReference type="SMART" id="SM00278">
    <property type="entry name" value="HhH1"/>
    <property type="match status" value="2"/>
</dbReference>
<dbReference type="SUPFAM" id="SSF46929">
    <property type="entry name" value="DNA helicase RuvA subunit, C-terminal domain"/>
    <property type="match status" value="1"/>
</dbReference>
<dbReference type="SUPFAM" id="SSF50249">
    <property type="entry name" value="Nucleic acid-binding proteins"/>
    <property type="match status" value="1"/>
</dbReference>
<dbReference type="SUPFAM" id="SSF47781">
    <property type="entry name" value="RuvA domain 2-like"/>
    <property type="match status" value="1"/>
</dbReference>
<reference key="1">
    <citation type="journal article" date="2006" name="Genome Biol.">
        <title>Genomic analysis reveals that Pseudomonas aeruginosa virulence is combinatorial.</title>
        <authorList>
            <person name="Lee D.G."/>
            <person name="Urbach J.M."/>
            <person name="Wu G."/>
            <person name="Liberati N.T."/>
            <person name="Feinbaum R.L."/>
            <person name="Miyata S."/>
            <person name="Diggins L.T."/>
            <person name="He J."/>
            <person name="Saucier M."/>
            <person name="Deziel E."/>
            <person name="Friedman L."/>
            <person name="Li L."/>
            <person name="Grills G."/>
            <person name="Montgomery K."/>
            <person name="Kucherlapati R."/>
            <person name="Rahme L.G."/>
            <person name="Ausubel F.M."/>
        </authorList>
    </citation>
    <scope>NUCLEOTIDE SEQUENCE [LARGE SCALE GENOMIC DNA]</scope>
    <source>
        <strain>UCBPP-PA14</strain>
    </source>
</reference>